<gene>
    <name evidence="1" type="primary">mraY</name>
    <name type="ordered locus">GWCH70_1018</name>
</gene>
<protein>
    <recommendedName>
        <fullName evidence="1">Phospho-N-acetylmuramoyl-pentapeptide-transferase</fullName>
        <ecNumber evidence="1">2.7.8.13</ecNumber>
    </recommendedName>
    <alternativeName>
        <fullName evidence="1">UDP-MurNAc-pentapeptide phosphotransferase</fullName>
    </alternativeName>
</protein>
<dbReference type="EC" id="2.7.8.13" evidence="1"/>
<dbReference type="EMBL" id="CP001638">
    <property type="protein sequence ID" value="ACS23878.1"/>
    <property type="molecule type" value="Genomic_DNA"/>
</dbReference>
<dbReference type="SMR" id="C5D8M1"/>
<dbReference type="STRING" id="471223.GWCH70_1018"/>
<dbReference type="KEGG" id="gwc:GWCH70_1018"/>
<dbReference type="eggNOG" id="COG0472">
    <property type="taxonomic scope" value="Bacteria"/>
</dbReference>
<dbReference type="HOGENOM" id="CLU_023982_0_1_9"/>
<dbReference type="OrthoDB" id="9805475at2"/>
<dbReference type="UniPathway" id="UPA00219"/>
<dbReference type="GO" id="GO:0005886">
    <property type="term" value="C:plasma membrane"/>
    <property type="evidence" value="ECO:0007669"/>
    <property type="project" value="UniProtKB-SubCell"/>
</dbReference>
<dbReference type="GO" id="GO:0046872">
    <property type="term" value="F:metal ion binding"/>
    <property type="evidence" value="ECO:0007669"/>
    <property type="project" value="UniProtKB-KW"/>
</dbReference>
<dbReference type="GO" id="GO:0008963">
    <property type="term" value="F:phospho-N-acetylmuramoyl-pentapeptide-transferase activity"/>
    <property type="evidence" value="ECO:0007669"/>
    <property type="project" value="UniProtKB-UniRule"/>
</dbReference>
<dbReference type="GO" id="GO:0051992">
    <property type="term" value="F:UDP-N-acetylmuramoyl-L-alanyl-D-glutamyl-meso-2,6-diaminopimelyl-D-alanyl-D-alanine:undecaprenyl-phosphate transferase activity"/>
    <property type="evidence" value="ECO:0007669"/>
    <property type="project" value="RHEA"/>
</dbReference>
<dbReference type="GO" id="GO:0051301">
    <property type="term" value="P:cell division"/>
    <property type="evidence" value="ECO:0007669"/>
    <property type="project" value="UniProtKB-KW"/>
</dbReference>
<dbReference type="GO" id="GO:0071555">
    <property type="term" value="P:cell wall organization"/>
    <property type="evidence" value="ECO:0007669"/>
    <property type="project" value="UniProtKB-KW"/>
</dbReference>
<dbReference type="GO" id="GO:0009252">
    <property type="term" value="P:peptidoglycan biosynthetic process"/>
    <property type="evidence" value="ECO:0007669"/>
    <property type="project" value="UniProtKB-UniRule"/>
</dbReference>
<dbReference type="GO" id="GO:0008360">
    <property type="term" value="P:regulation of cell shape"/>
    <property type="evidence" value="ECO:0007669"/>
    <property type="project" value="UniProtKB-KW"/>
</dbReference>
<dbReference type="CDD" id="cd06852">
    <property type="entry name" value="GT_MraY"/>
    <property type="match status" value="1"/>
</dbReference>
<dbReference type="HAMAP" id="MF_00038">
    <property type="entry name" value="MraY"/>
    <property type="match status" value="1"/>
</dbReference>
<dbReference type="InterPro" id="IPR000715">
    <property type="entry name" value="Glycosyl_transferase_4"/>
</dbReference>
<dbReference type="InterPro" id="IPR003524">
    <property type="entry name" value="PNAcMuramoyl-5peptid_Trfase"/>
</dbReference>
<dbReference type="InterPro" id="IPR018480">
    <property type="entry name" value="PNAcMuramoyl-5peptid_Trfase_CS"/>
</dbReference>
<dbReference type="NCBIfam" id="TIGR00445">
    <property type="entry name" value="mraY"/>
    <property type="match status" value="1"/>
</dbReference>
<dbReference type="PANTHER" id="PTHR22926">
    <property type="entry name" value="PHOSPHO-N-ACETYLMURAMOYL-PENTAPEPTIDE-TRANSFERASE"/>
    <property type="match status" value="1"/>
</dbReference>
<dbReference type="PANTHER" id="PTHR22926:SF5">
    <property type="entry name" value="PHOSPHO-N-ACETYLMURAMOYL-PENTAPEPTIDE-TRANSFERASE HOMOLOG"/>
    <property type="match status" value="1"/>
</dbReference>
<dbReference type="Pfam" id="PF00953">
    <property type="entry name" value="Glycos_transf_4"/>
    <property type="match status" value="1"/>
</dbReference>
<dbReference type="PROSITE" id="PS01347">
    <property type="entry name" value="MRAY_1"/>
    <property type="match status" value="1"/>
</dbReference>
<dbReference type="PROSITE" id="PS01348">
    <property type="entry name" value="MRAY_2"/>
    <property type="match status" value="1"/>
</dbReference>
<sequence>MLEQVMVLAIILSFLITVILSPLFIPFLRRLKFGQSIREEGPKSHQKKTGTPTMGGIMILLSIVVTTLLMTRKFATLSVETYLLLFVTIGYGLLGFLDDFIKVVMKRNLGLTSRQKLIGQLMIAIVFYFVYQRSGFSTALHIPGTDLSINLGFGYVLLLIFMLVGGSNAVNLTDGLDGLLAGTAAIAFGAYAVLAWNQGQYDIAIFCVSVVGAVLGFLVFNAHPAKVFMGDTGSLALGGAIATVAILTKLEILLVIIGGVFVIETLSVIIQVISFKTTGKRVFRMSPLHHHYELIGWSEWRVVVTFWAVGLLFAMLGIYIEVWI</sequence>
<evidence type="ECO:0000255" key="1">
    <source>
        <dbReference type="HAMAP-Rule" id="MF_00038"/>
    </source>
</evidence>
<accession>C5D8M1</accession>
<reference key="1">
    <citation type="submission" date="2009-06" db="EMBL/GenBank/DDBJ databases">
        <title>Complete sequence of chromosome of Geopacillus sp. WCH70.</title>
        <authorList>
            <consortium name="US DOE Joint Genome Institute"/>
            <person name="Lucas S."/>
            <person name="Copeland A."/>
            <person name="Lapidus A."/>
            <person name="Glavina del Rio T."/>
            <person name="Dalin E."/>
            <person name="Tice H."/>
            <person name="Bruce D."/>
            <person name="Goodwin L."/>
            <person name="Pitluck S."/>
            <person name="Chertkov O."/>
            <person name="Brettin T."/>
            <person name="Detter J.C."/>
            <person name="Han C."/>
            <person name="Larimer F."/>
            <person name="Land M."/>
            <person name="Hauser L."/>
            <person name="Kyrpides N."/>
            <person name="Mikhailova N."/>
            <person name="Brumm P."/>
            <person name="Mead D.A."/>
            <person name="Richardson P."/>
        </authorList>
    </citation>
    <scope>NUCLEOTIDE SEQUENCE [LARGE SCALE GENOMIC DNA]</scope>
    <source>
        <strain>WCH70</strain>
    </source>
</reference>
<keyword id="KW-0131">Cell cycle</keyword>
<keyword id="KW-0132">Cell division</keyword>
<keyword id="KW-1003">Cell membrane</keyword>
<keyword id="KW-0133">Cell shape</keyword>
<keyword id="KW-0961">Cell wall biogenesis/degradation</keyword>
<keyword id="KW-0460">Magnesium</keyword>
<keyword id="KW-0472">Membrane</keyword>
<keyword id="KW-0479">Metal-binding</keyword>
<keyword id="KW-0573">Peptidoglycan synthesis</keyword>
<keyword id="KW-0808">Transferase</keyword>
<keyword id="KW-0812">Transmembrane</keyword>
<keyword id="KW-1133">Transmembrane helix</keyword>
<organism>
    <name type="scientific">Geobacillus sp. (strain WCH70)</name>
    <dbReference type="NCBI Taxonomy" id="471223"/>
    <lineage>
        <taxon>Bacteria</taxon>
        <taxon>Bacillati</taxon>
        <taxon>Bacillota</taxon>
        <taxon>Bacilli</taxon>
        <taxon>Bacillales</taxon>
        <taxon>Anoxybacillaceae</taxon>
        <taxon>Geobacillus</taxon>
    </lineage>
</organism>
<proteinExistence type="inferred from homology"/>
<comment type="function">
    <text evidence="1">Catalyzes the initial step of the lipid cycle reactions in the biosynthesis of the cell wall peptidoglycan: transfers peptidoglycan precursor phospho-MurNAc-pentapeptide from UDP-MurNAc-pentapeptide onto the lipid carrier undecaprenyl phosphate, yielding undecaprenyl-pyrophosphoryl-MurNAc-pentapeptide, known as lipid I.</text>
</comment>
<comment type="catalytic activity">
    <reaction evidence="1">
        <text>UDP-N-acetyl-alpha-D-muramoyl-L-alanyl-gamma-D-glutamyl-meso-2,6-diaminopimeloyl-D-alanyl-D-alanine + di-trans,octa-cis-undecaprenyl phosphate = di-trans,octa-cis-undecaprenyl diphospho-N-acetyl-alpha-D-muramoyl-L-alanyl-D-glutamyl-meso-2,6-diaminopimeloyl-D-alanyl-D-alanine + UMP</text>
        <dbReference type="Rhea" id="RHEA:28386"/>
        <dbReference type="ChEBI" id="CHEBI:57865"/>
        <dbReference type="ChEBI" id="CHEBI:60392"/>
        <dbReference type="ChEBI" id="CHEBI:61386"/>
        <dbReference type="ChEBI" id="CHEBI:61387"/>
        <dbReference type="EC" id="2.7.8.13"/>
    </reaction>
</comment>
<comment type="cofactor">
    <cofactor evidence="1">
        <name>Mg(2+)</name>
        <dbReference type="ChEBI" id="CHEBI:18420"/>
    </cofactor>
</comment>
<comment type="pathway">
    <text evidence="1">Cell wall biogenesis; peptidoglycan biosynthesis.</text>
</comment>
<comment type="subcellular location">
    <subcellularLocation>
        <location evidence="1">Cell membrane</location>
        <topology evidence="1">Multi-pass membrane protein</topology>
    </subcellularLocation>
</comment>
<comment type="similarity">
    <text evidence="1">Belongs to the glycosyltransferase 4 family. MraY subfamily.</text>
</comment>
<name>MRAY_GEOSW</name>
<feature type="chain" id="PRO_1000202070" description="Phospho-N-acetylmuramoyl-pentapeptide-transferase">
    <location>
        <begin position="1"/>
        <end position="324"/>
    </location>
</feature>
<feature type="transmembrane region" description="Helical" evidence="1">
    <location>
        <begin position="5"/>
        <end position="25"/>
    </location>
</feature>
<feature type="transmembrane region" description="Helical" evidence="1">
    <location>
        <begin position="50"/>
        <end position="70"/>
    </location>
</feature>
<feature type="transmembrane region" description="Helical" evidence="1">
    <location>
        <begin position="77"/>
        <end position="97"/>
    </location>
</feature>
<feature type="transmembrane region" description="Helical" evidence="1">
    <location>
        <begin position="117"/>
        <end position="137"/>
    </location>
</feature>
<feature type="transmembrane region" description="Helical" evidence="1">
    <location>
        <begin position="147"/>
        <end position="167"/>
    </location>
</feature>
<feature type="transmembrane region" description="Helical" evidence="1">
    <location>
        <begin position="176"/>
        <end position="196"/>
    </location>
</feature>
<feature type="transmembrane region" description="Helical" evidence="1">
    <location>
        <begin position="203"/>
        <end position="223"/>
    </location>
</feature>
<feature type="transmembrane region" description="Helical" evidence="1">
    <location>
        <begin position="227"/>
        <end position="247"/>
    </location>
</feature>
<feature type="transmembrane region" description="Helical" evidence="1">
    <location>
        <begin position="250"/>
        <end position="270"/>
    </location>
</feature>
<feature type="transmembrane region" description="Helical" evidence="1">
    <location>
        <begin position="304"/>
        <end position="324"/>
    </location>
</feature>